<reference key="1">
    <citation type="journal article" date="2008" name="J. Bacteriol.">
        <title>The genome sequence of the tomato-pathogenic actinomycete Clavibacter michiganensis subsp. michiganensis NCPPB382 reveals a large island involved in pathogenicity.</title>
        <authorList>
            <person name="Gartemann K.-H."/>
            <person name="Abt B."/>
            <person name="Bekel T."/>
            <person name="Burger A."/>
            <person name="Engemann J."/>
            <person name="Fluegel M."/>
            <person name="Gaigalat L."/>
            <person name="Goesmann A."/>
            <person name="Graefen I."/>
            <person name="Kalinowski J."/>
            <person name="Kaup O."/>
            <person name="Kirchner O."/>
            <person name="Krause L."/>
            <person name="Linke B."/>
            <person name="McHardy A."/>
            <person name="Meyer F."/>
            <person name="Pohle S."/>
            <person name="Rueckert C."/>
            <person name="Schneiker S."/>
            <person name="Zellermann E.-M."/>
            <person name="Puehler A."/>
            <person name="Eichenlaub R."/>
            <person name="Kaiser O."/>
            <person name="Bartels D."/>
        </authorList>
    </citation>
    <scope>NUCLEOTIDE SEQUENCE [LARGE SCALE GENOMIC DNA]</scope>
    <source>
        <strain>NCPPB 382</strain>
    </source>
</reference>
<feature type="chain" id="PRO_1000048956" description="Large ribosomal subunit protein bL20">
    <location>
        <begin position="1"/>
        <end position="130"/>
    </location>
</feature>
<proteinExistence type="inferred from homology"/>
<accession>A5CSJ9</accession>
<dbReference type="EMBL" id="AM711867">
    <property type="protein sequence ID" value="CAN02072.1"/>
    <property type="molecule type" value="Genomic_DNA"/>
</dbReference>
<dbReference type="RefSeq" id="WP_012038696.1">
    <property type="nucleotide sequence ID" value="NC_009480.1"/>
</dbReference>
<dbReference type="SMR" id="A5CSJ9"/>
<dbReference type="GeneID" id="92983756"/>
<dbReference type="KEGG" id="cmi:CMM_2009"/>
<dbReference type="eggNOG" id="COG0292">
    <property type="taxonomic scope" value="Bacteria"/>
</dbReference>
<dbReference type="HOGENOM" id="CLU_123265_0_0_11"/>
<dbReference type="OrthoDB" id="9808966at2"/>
<dbReference type="Proteomes" id="UP000001564">
    <property type="component" value="Chromosome"/>
</dbReference>
<dbReference type="GO" id="GO:1990904">
    <property type="term" value="C:ribonucleoprotein complex"/>
    <property type="evidence" value="ECO:0007669"/>
    <property type="project" value="UniProtKB-KW"/>
</dbReference>
<dbReference type="GO" id="GO:0005840">
    <property type="term" value="C:ribosome"/>
    <property type="evidence" value="ECO:0007669"/>
    <property type="project" value="UniProtKB-KW"/>
</dbReference>
<dbReference type="GO" id="GO:0019843">
    <property type="term" value="F:rRNA binding"/>
    <property type="evidence" value="ECO:0007669"/>
    <property type="project" value="UniProtKB-UniRule"/>
</dbReference>
<dbReference type="GO" id="GO:0003735">
    <property type="term" value="F:structural constituent of ribosome"/>
    <property type="evidence" value="ECO:0007669"/>
    <property type="project" value="InterPro"/>
</dbReference>
<dbReference type="GO" id="GO:0000027">
    <property type="term" value="P:ribosomal large subunit assembly"/>
    <property type="evidence" value="ECO:0007669"/>
    <property type="project" value="UniProtKB-UniRule"/>
</dbReference>
<dbReference type="GO" id="GO:0006412">
    <property type="term" value="P:translation"/>
    <property type="evidence" value="ECO:0007669"/>
    <property type="project" value="InterPro"/>
</dbReference>
<dbReference type="CDD" id="cd07026">
    <property type="entry name" value="Ribosomal_L20"/>
    <property type="match status" value="1"/>
</dbReference>
<dbReference type="FunFam" id="1.10.1900.20:FF:000001">
    <property type="entry name" value="50S ribosomal protein L20"/>
    <property type="match status" value="1"/>
</dbReference>
<dbReference type="Gene3D" id="6.10.160.10">
    <property type="match status" value="1"/>
</dbReference>
<dbReference type="Gene3D" id="1.10.1900.20">
    <property type="entry name" value="Ribosomal protein L20"/>
    <property type="match status" value="1"/>
</dbReference>
<dbReference type="HAMAP" id="MF_00382">
    <property type="entry name" value="Ribosomal_bL20"/>
    <property type="match status" value="1"/>
</dbReference>
<dbReference type="InterPro" id="IPR005813">
    <property type="entry name" value="Ribosomal_bL20"/>
</dbReference>
<dbReference type="InterPro" id="IPR049946">
    <property type="entry name" value="RIBOSOMAL_L20_CS"/>
</dbReference>
<dbReference type="InterPro" id="IPR035566">
    <property type="entry name" value="Ribosomal_protein_bL20_C"/>
</dbReference>
<dbReference type="NCBIfam" id="TIGR01032">
    <property type="entry name" value="rplT_bact"/>
    <property type="match status" value="1"/>
</dbReference>
<dbReference type="PANTHER" id="PTHR10986">
    <property type="entry name" value="39S RIBOSOMAL PROTEIN L20"/>
    <property type="match status" value="1"/>
</dbReference>
<dbReference type="Pfam" id="PF00453">
    <property type="entry name" value="Ribosomal_L20"/>
    <property type="match status" value="1"/>
</dbReference>
<dbReference type="PRINTS" id="PR00062">
    <property type="entry name" value="RIBOSOMALL20"/>
</dbReference>
<dbReference type="SUPFAM" id="SSF74731">
    <property type="entry name" value="Ribosomal protein L20"/>
    <property type="match status" value="1"/>
</dbReference>
<dbReference type="PROSITE" id="PS00937">
    <property type="entry name" value="RIBOSOMAL_L20"/>
    <property type="match status" value="1"/>
</dbReference>
<gene>
    <name evidence="1" type="primary">rplT</name>
    <name type="ordered locus">CMM_2009</name>
</gene>
<organism>
    <name type="scientific">Clavibacter michiganensis subsp. michiganensis (strain NCPPB 382)</name>
    <dbReference type="NCBI Taxonomy" id="443906"/>
    <lineage>
        <taxon>Bacteria</taxon>
        <taxon>Bacillati</taxon>
        <taxon>Actinomycetota</taxon>
        <taxon>Actinomycetes</taxon>
        <taxon>Micrococcales</taxon>
        <taxon>Microbacteriaceae</taxon>
        <taxon>Clavibacter</taxon>
    </lineage>
</organism>
<evidence type="ECO:0000255" key="1">
    <source>
        <dbReference type="HAMAP-Rule" id="MF_00382"/>
    </source>
</evidence>
<evidence type="ECO:0000305" key="2"/>
<protein>
    <recommendedName>
        <fullName evidence="1">Large ribosomal subunit protein bL20</fullName>
    </recommendedName>
    <alternativeName>
        <fullName evidence="2">50S ribosomal protein L20</fullName>
    </alternativeName>
</protein>
<name>RL20_CLAM3</name>
<sequence>MARVKRAVNAHKKRRVILERAAGYRGQRSRLYRKAKEQVTHSLVYAYRDRRAKKGEFRRLWIQRINAAARANGLTYNRLIQGLSLAGVQVDRRILAELAVHEPATFASLVQTAKAALPANTSAPKVAANA</sequence>
<keyword id="KW-0687">Ribonucleoprotein</keyword>
<keyword id="KW-0689">Ribosomal protein</keyword>
<keyword id="KW-0694">RNA-binding</keyword>
<keyword id="KW-0699">rRNA-binding</keyword>
<comment type="function">
    <text evidence="1">Binds directly to 23S ribosomal RNA and is necessary for the in vitro assembly process of the 50S ribosomal subunit. It is not involved in the protein synthesizing functions of that subunit.</text>
</comment>
<comment type="similarity">
    <text evidence="1">Belongs to the bacterial ribosomal protein bL20 family.</text>
</comment>